<evidence type="ECO:0000250" key="1"/>
<evidence type="ECO:0000255" key="2">
    <source>
        <dbReference type="PROSITE-ProRule" id="PRU00434"/>
    </source>
</evidence>
<evidence type="ECO:0000305" key="3"/>
<dbReference type="EMBL" id="AL596170">
    <property type="protein sequence ID" value="CAC97193.1"/>
    <property type="molecule type" value="Genomic_DNA"/>
</dbReference>
<dbReference type="PIR" id="AI1677">
    <property type="entry name" value="AI1677"/>
</dbReference>
<dbReference type="RefSeq" id="WP_010991683.1">
    <property type="nucleotide sequence ID" value="NC_003212.1"/>
</dbReference>
<dbReference type="SMR" id="Q92AF9"/>
<dbReference type="STRING" id="272626.gene:17566321"/>
<dbReference type="KEGG" id="lin:lin1963"/>
<dbReference type="eggNOG" id="COG1121">
    <property type="taxonomic scope" value="Bacteria"/>
</dbReference>
<dbReference type="HOGENOM" id="CLU_000604_1_11_9"/>
<dbReference type="OrthoDB" id="9806726at2"/>
<dbReference type="Proteomes" id="UP000002513">
    <property type="component" value="Chromosome"/>
</dbReference>
<dbReference type="GO" id="GO:0005886">
    <property type="term" value="C:plasma membrane"/>
    <property type="evidence" value="ECO:0007669"/>
    <property type="project" value="UniProtKB-SubCell"/>
</dbReference>
<dbReference type="GO" id="GO:0005524">
    <property type="term" value="F:ATP binding"/>
    <property type="evidence" value="ECO:0007669"/>
    <property type="project" value="UniProtKB-KW"/>
</dbReference>
<dbReference type="GO" id="GO:0016887">
    <property type="term" value="F:ATP hydrolysis activity"/>
    <property type="evidence" value="ECO:0007669"/>
    <property type="project" value="InterPro"/>
</dbReference>
<dbReference type="CDD" id="cd03235">
    <property type="entry name" value="ABC_Metallic_Cations"/>
    <property type="match status" value="1"/>
</dbReference>
<dbReference type="FunFam" id="3.40.50.300:FF:000134">
    <property type="entry name" value="Iron-enterobactin ABC transporter ATP-binding protein"/>
    <property type="match status" value="1"/>
</dbReference>
<dbReference type="Gene3D" id="3.40.50.300">
    <property type="entry name" value="P-loop containing nucleotide triphosphate hydrolases"/>
    <property type="match status" value="1"/>
</dbReference>
<dbReference type="InterPro" id="IPR003593">
    <property type="entry name" value="AAA+_ATPase"/>
</dbReference>
<dbReference type="InterPro" id="IPR003439">
    <property type="entry name" value="ABC_transporter-like_ATP-bd"/>
</dbReference>
<dbReference type="InterPro" id="IPR017871">
    <property type="entry name" value="ABC_transporter-like_CS"/>
</dbReference>
<dbReference type="InterPro" id="IPR050153">
    <property type="entry name" value="Metal_Ion_Import_ABC"/>
</dbReference>
<dbReference type="InterPro" id="IPR027417">
    <property type="entry name" value="P-loop_NTPase"/>
</dbReference>
<dbReference type="PANTHER" id="PTHR42734:SF5">
    <property type="entry name" value="IRON TRANSPORT SYSTEM ATP-BINDING PROTEIN HI_0361-RELATED"/>
    <property type="match status" value="1"/>
</dbReference>
<dbReference type="PANTHER" id="PTHR42734">
    <property type="entry name" value="METAL TRANSPORT SYSTEM ATP-BINDING PROTEIN TM_0124-RELATED"/>
    <property type="match status" value="1"/>
</dbReference>
<dbReference type="Pfam" id="PF00005">
    <property type="entry name" value="ABC_tran"/>
    <property type="match status" value="1"/>
</dbReference>
<dbReference type="SMART" id="SM00382">
    <property type="entry name" value="AAA"/>
    <property type="match status" value="1"/>
</dbReference>
<dbReference type="SUPFAM" id="SSF52540">
    <property type="entry name" value="P-loop containing nucleoside triphosphate hydrolases"/>
    <property type="match status" value="1"/>
</dbReference>
<dbReference type="PROSITE" id="PS00211">
    <property type="entry name" value="ABC_TRANSPORTER_1"/>
    <property type="match status" value="1"/>
</dbReference>
<dbReference type="PROSITE" id="PS50893">
    <property type="entry name" value="ABC_TRANSPORTER_2"/>
    <property type="match status" value="1"/>
</dbReference>
<feature type="chain" id="PRO_0000092525" description="Manganese transport system ATP-binding protein MntB">
    <location>
        <begin position="1"/>
        <end position="240"/>
    </location>
</feature>
<feature type="domain" description="ABC transporter" evidence="2">
    <location>
        <begin position="1"/>
        <end position="233"/>
    </location>
</feature>
<feature type="binding site" evidence="2">
    <location>
        <begin position="33"/>
        <end position="40"/>
    </location>
    <ligand>
        <name>ATP</name>
        <dbReference type="ChEBI" id="CHEBI:30616"/>
    </ligand>
</feature>
<sequence>MNIQGLTIAYKQKVAIDDVTLQIATGKLTGIVGPNGAGKSTLLKGMMGLVPREKGQVTLDNKPLTYWRKKIAYVPQRSEVDLTFPITVFDMVLLGTYPALGLIKRPGKKEKQLAFDALEQVEMTAFSKRQIGELSGGQLQRVFIARALAQHAEIFFLDEPFAGIDMASEALIMKLLKKLRDNGKTIVVVHHDFHKVAAYFDDIILLNKKLVAHGPVEQTFTEEKIQFAYGDAPVAFAAGV</sequence>
<proteinExistence type="inferred from homology"/>
<reference key="1">
    <citation type="journal article" date="2001" name="Science">
        <title>Comparative genomics of Listeria species.</title>
        <authorList>
            <person name="Glaser P."/>
            <person name="Frangeul L."/>
            <person name="Buchrieser C."/>
            <person name="Rusniok C."/>
            <person name="Amend A."/>
            <person name="Baquero F."/>
            <person name="Berche P."/>
            <person name="Bloecker H."/>
            <person name="Brandt P."/>
            <person name="Chakraborty T."/>
            <person name="Charbit A."/>
            <person name="Chetouani F."/>
            <person name="Couve E."/>
            <person name="de Daruvar A."/>
            <person name="Dehoux P."/>
            <person name="Domann E."/>
            <person name="Dominguez-Bernal G."/>
            <person name="Duchaud E."/>
            <person name="Durant L."/>
            <person name="Dussurget O."/>
            <person name="Entian K.-D."/>
            <person name="Fsihi H."/>
            <person name="Garcia-del Portillo F."/>
            <person name="Garrido P."/>
            <person name="Gautier L."/>
            <person name="Goebel W."/>
            <person name="Gomez-Lopez N."/>
            <person name="Hain T."/>
            <person name="Hauf J."/>
            <person name="Jackson D."/>
            <person name="Jones L.-M."/>
            <person name="Kaerst U."/>
            <person name="Kreft J."/>
            <person name="Kuhn M."/>
            <person name="Kunst F."/>
            <person name="Kurapkat G."/>
            <person name="Madueno E."/>
            <person name="Maitournam A."/>
            <person name="Mata Vicente J."/>
            <person name="Ng E."/>
            <person name="Nedjari H."/>
            <person name="Nordsiek G."/>
            <person name="Novella S."/>
            <person name="de Pablos B."/>
            <person name="Perez-Diaz J.-C."/>
            <person name="Purcell R."/>
            <person name="Remmel B."/>
            <person name="Rose M."/>
            <person name="Schlueter T."/>
            <person name="Simoes N."/>
            <person name="Tierrez A."/>
            <person name="Vazquez-Boland J.-A."/>
            <person name="Voss H."/>
            <person name="Wehland J."/>
            <person name="Cossart P."/>
        </authorList>
    </citation>
    <scope>NUCLEOTIDE SEQUENCE [LARGE SCALE GENOMIC DNA]</scope>
    <source>
        <strain>ATCC BAA-680 / CLIP 11262</strain>
    </source>
</reference>
<keyword id="KW-0067">ATP-binding</keyword>
<keyword id="KW-1003">Cell membrane</keyword>
<keyword id="KW-0472">Membrane</keyword>
<keyword id="KW-0547">Nucleotide-binding</keyword>
<keyword id="KW-0813">Transport</keyword>
<gene>
    <name type="primary">mntB</name>
    <name type="ordered locus">lin1963</name>
</gene>
<protein>
    <recommendedName>
        <fullName>Manganese transport system ATP-binding protein MntB</fullName>
    </recommendedName>
</protein>
<organism>
    <name type="scientific">Listeria innocua serovar 6a (strain ATCC BAA-680 / CLIP 11262)</name>
    <dbReference type="NCBI Taxonomy" id="272626"/>
    <lineage>
        <taxon>Bacteria</taxon>
        <taxon>Bacillati</taxon>
        <taxon>Bacillota</taxon>
        <taxon>Bacilli</taxon>
        <taxon>Bacillales</taxon>
        <taxon>Listeriaceae</taxon>
        <taxon>Listeria</taxon>
    </lineage>
</organism>
<name>MNTB_LISIN</name>
<accession>Q92AF9</accession>
<comment type="function">
    <text evidence="1">This protein is probably a component of a manganese permease, a binding protein-dependent, ATP-driven transport system. Probably responsible for energy coupling to the transport system (By similarity).</text>
</comment>
<comment type="subcellular location">
    <subcellularLocation>
        <location evidence="3">Cell membrane</location>
        <topology evidence="3">Peripheral membrane protein</topology>
    </subcellularLocation>
</comment>
<comment type="similarity">
    <text evidence="3">Belongs to the ABC transporter superfamily.</text>
</comment>